<proteinExistence type="inferred from homology"/>
<protein>
    <recommendedName>
        <fullName evidence="1">Probable ECA polymerase</fullName>
    </recommendedName>
</protein>
<dbReference type="EMBL" id="BX950851">
    <property type="protein sequence ID" value="CAG77098.1"/>
    <property type="molecule type" value="Genomic_DNA"/>
</dbReference>
<dbReference type="RefSeq" id="WP_011095672.1">
    <property type="nucleotide sequence ID" value="NC_004547.2"/>
</dbReference>
<dbReference type="STRING" id="218491.ECA4201"/>
<dbReference type="GeneID" id="57210867"/>
<dbReference type="KEGG" id="eca:ECA4201"/>
<dbReference type="PATRIC" id="fig|218491.5.peg.4277"/>
<dbReference type="eggNOG" id="ENOG502Z7MA">
    <property type="taxonomic scope" value="Bacteria"/>
</dbReference>
<dbReference type="HOGENOM" id="CLU_049711_0_0_6"/>
<dbReference type="OrthoDB" id="6415259at2"/>
<dbReference type="UniPathway" id="UPA00566"/>
<dbReference type="Proteomes" id="UP000007966">
    <property type="component" value="Chromosome"/>
</dbReference>
<dbReference type="GO" id="GO:0005886">
    <property type="term" value="C:plasma membrane"/>
    <property type="evidence" value="ECO:0007669"/>
    <property type="project" value="UniProtKB-SubCell"/>
</dbReference>
<dbReference type="GO" id="GO:0009246">
    <property type="term" value="P:enterobacterial common antigen biosynthetic process"/>
    <property type="evidence" value="ECO:0007669"/>
    <property type="project" value="UniProtKB-UniRule"/>
</dbReference>
<dbReference type="HAMAP" id="MF_01003">
    <property type="entry name" value="WzyE"/>
    <property type="match status" value="1"/>
</dbReference>
<dbReference type="InterPro" id="IPR010691">
    <property type="entry name" value="WzyE"/>
</dbReference>
<dbReference type="NCBIfam" id="NF002820">
    <property type="entry name" value="PRK02975.1"/>
    <property type="match status" value="1"/>
</dbReference>
<dbReference type="Pfam" id="PF06899">
    <property type="entry name" value="WzyE"/>
    <property type="match status" value="1"/>
</dbReference>
<sequence length="463" mass="52964">MTLGQFGGLFVVYLISVIFILSLTWMEFRRVRFNFNVLFSLLYLLTFYFGFPFTCVLVFRFGVEVVPVQYLLQAMLSATAFYAVYYVSYKTRLRQKTSVPRAPLLTVNRVEANLTWLLLALIAVATVGIFFLNNGFLLFKLRSYSQIFSSDVSGVALKRFFYFFIPAMLVVYFLRQTQRAWLLFLIGTVAFGMLTYVIVGGTRANLIIAFALFLFIGIVRGWITLWMLVAAGIFGIVGMFWLALKRYGLDVSGDYAFYTFLYLTRDTFSPWENLALLWQNYDKIEFQGLAPIARDFYVFIPSWLWPDRPNLVLNSANYFTWEVLNNHSGLAISPTLLGSLVVMGGVLFIPLGAIAVGLVIKWFDWVYELGKNDSNRYKAAILQAFCFGAVFNIIVLTREGVDSFVSRVVFFCLIFGLCLLVAKLLYWLLESAGLIRQRLRRMRATPLAPTPNTVQDPVIKEQI</sequence>
<gene>
    <name evidence="1" type="primary">wzyE</name>
    <name type="ordered locus">ECA4201</name>
</gene>
<organism>
    <name type="scientific">Pectobacterium atrosepticum (strain SCRI 1043 / ATCC BAA-672)</name>
    <name type="common">Erwinia carotovora subsp. atroseptica</name>
    <dbReference type="NCBI Taxonomy" id="218491"/>
    <lineage>
        <taxon>Bacteria</taxon>
        <taxon>Pseudomonadati</taxon>
        <taxon>Pseudomonadota</taxon>
        <taxon>Gammaproteobacteria</taxon>
        <taxon>Enterobacterales</taxon>
        <taxon>Pectobacteriaceae</taxon>
        <taxon>Pectobacterium</taxon>
    </lineage>
</organism>
<name>WZYE_PECAS</name>
<accession>Q6CZF1</accession>
<evidence type="ECO:0000255" key="1">
    <source>
        <dbReference type="HAMAP-Rule" id="MF_01003"/>
    </source>
</evidence>
<feature type="chain" id="PRO_0000208539" description="Probable ECA polymerase">
    <location>
        <begin position="1"/>
        <end position="463"/>
    </location>
</feature>
<feature type="transmembrane region" description="Helical" evidence="1">
    <location>
        <begin position="6"/>
        <end position="26"/>
    </location>
</feature>
<feature type="transmembrane region" description="Helical" evidence="1">
    <location>
        <begin position="39"/>
        <end position="59"/>
    </location>
</feature>
<feature type="transmembrane region" description="Helical" evidence="1">
    <location>
        <begin position="65"/>
        <end position="85"/>
    </location>
</feature>
<feature type="transmembrane region" description="Helical" evidence="1">
    <location>
        <begin position="112"/>
        <end position="132"/>
    </location>
</feature>
<feature type="transmembrane region" description="Helical" evidence="1">
    <location>
        <begin position="154"/>
        <end position="174"/>
    </location>
</feature>
<feature type="transmembrane region" description="Helical" evidence="1">
    <location>
        <begin position="180"/>
        <end position="200"/>
    </location>
</feature>
<feature type="transmembrane region" description="Helical" evidence="1">
    <location>
        <begin position="201"/>
        <end position="221"/>
    </location>
</feature>
<feature type="transmembrane region" description="Helical" evidence="1">
    <location>
        <begin position="222"/>
        <end position="242"/>
    </location>
</feature>
<feature type="transmembrane region" description="Helical" evidence="1">
    <location>
        <begin position="340"/>
        <end position="360"/>
    </location>
</feature>
<feature type="transmembrane region" description="Helical" evidence="1">
    <location>
        <begin position="377"/>
        <end position="397"/>
    </location>
</feature>
<feature type="transmembrane region" description="Helical" evidence="1">
    <location>
        <begin position="408"/>
        <end position="428"/>
    </location>
</feature>
<keyword id="KW-0997">Cell inner membrane</keyword>
<keyword id="KW-1003">Cell membrane</keyword>
<keyword id="KW-0472">Membrane</keyword>
<keyword id="KW-1185">Reference proteome</keyword>
<keyword id="KW-0812">Transmembrane</keyword>
<keyword id="KW-1133">Transmembrane helix</keyword>
<reference key="1">
    <citation type="journal article" date="2004" name="Proc. Natl. Acad. Sci. U.S.A.">
        <title>Genome sequence of the enterobacterial phytopathogen Erwinia carotovora subsp. atroseptica and characterization of virulence factors.</title>
        <authorList>
            <person name="Bell K.S."/>
            <person name="Sebaihia M."/>
            <person name="Pritchard L."/>
            <person name="Holden M.T.G."/>
            <person name="Hyman L.J."/>
            <person name="Holeva M.C."/>
            <person name="Thomson N.R."/>
            <person name="Bentley S.D."/>
            <person name="Churcher L.J.C."/>
            <person name="Mungall K."/>
            <person name="Atkin R."/>
            <person name="Bason N."/>
            <person name="Brooks K."/>
            <person name="Chillingworth T."/>
            <person name="Clark K."/>
            <person name="Doggett J."/>
            <person name="Fraser A."/>
            <person name="Hance Z."/>
            <person name="Hauser H."/>
            <person name="Jagels K."/>
            <person name="Moule S."/>
            <person name="Norbertczak H."/>
            <person name="Ormond D."/>
            <person name="Price C."/>
            <person name="Quail M.A."/>
            <person name="Sanders M."/>
            <person name="Walker D."/>
            <person name="Whitehead S."/>
            <person name="Salmond G.P.C."/>
            <person name="Birch P.R.J."/>
            <person name="Parkhill J."/>
            <person name="Toth I.K."/>
        </authorList>
    </citation>
    <scope>NUCLEOTIDE SEQUENCE [LARGE SCALE GENOMIC DNA]</scope>
    <source>
        <strain>SCRI 1043 / ATCC BAA-672</strain>
    </source>
</reference>
<comment type="function">
    <text evidence="1">Probably involved in the polymerization of enterobacterial common antigen (ECA) trisaccharide repeat units.</text>
</comment>
<comment type="pathway">
    <text evidence="1">Bacterial outer membrane biogenesis; enterobacterial common antigen biosynthesis.</text>
</comment>
<comment type="subunit">
    <text evidence="1">Probably part of a complex composed of WzxE, WzyE and WzzE.</text>
</comment>
<comment type="subcellular location">
    <subcellularLocation>
        <location evidence="1">Cell inner membrane</location>
        <topology evidence="1">Multi-pass membrane protein</topology>
    </subcellularLocation>
</comment>
<comment type="similarity">
    <text evidence="1">Belongs to the WzyE family.</text>
</comment>